<keyword id="KW-0067">ATP-binding</keyword>
<keyword id="KW-0106">Calcium</keyword>
<keyword id="KW-0903">Direct protein sequencing</keyword>
<keyword id="KW-1015">Disulfide bond</keyword>
<keyword id="KW-0325">Glycoprotein</keyword>
<keyword id="KW-0378">Hydrolase</keyword>
<keyword id="KW-0460">Magnesium</keyword>
<keyword id="KW-0472">Membrane</keyword>
<keyword id="KW-0547">Nucleotide-binding</keyword>
<keyword id="KW-1185">Reference proteome</keyword>
<keyword id="KW-0812">Transmembrane</keyword>
<keyword id="KW-1133">Transmembrane helix</keyword>
<protein>
    <recommendedName>
        <fullName evidence="2">Ectonucleoside triphosphate diphosphohydrolase 1</fullName>
        <ecNumber evidence="2">3.6.1.5</ecNumber>
    </recommendedName>
    <alternativeName>
        <fullName evidence="2">ATP diphosphohydrolase</fullName>
        <shortName evidence="2">ATP-DPH</shortName>
        <shortName evidence="2">ATPDase</shortName>
    </alternativeName>
    <alternativeName>
        <fullName evidence="2">Ecto-ATP diphosphohydrolase 1</fullName>
        <shortName>Ecto-ATPDase 1</shortName>
        <shortName>Ecto-ATPase 1</shortName>
    </alternativeName>
    <alternativeName>
        <fullName evidence="2">Ecto-apyrase</fullName>
    </alternativeName>
    <alternativeName>
        <fullName evidence="2">Lymphoid cell activation antigen</fullName>
    </alternativeName>
    <alternativeName>
        <fullName evidence="3">Nucleoside triphosphate diphosphohydrolase 1</fullName>
        <shortName evidence="3">NTPDase1</shortName>
    </alternativeName>
    <cdAntigenName evidence="2">CD39</cdAntigenName>
</protein>
<feature type="chain" id="PRO_0000209901" description="Ectonucleoside triphosphate diphosphohydrolase 1">
    <location>
        <begin position="1"/>
        <end position="513"/>
    </location>
</feature>
<feature type="topological domain" description="Cytoplasmic" evidence="5">
    <location>
        <begin position="1"/>
        <end position="16"/>
    </location>
</feature>
<feature type="transmembrane region" description="Helical" evidence="5">
    <location>
        <begin position="17"/>
        <end position="37"/>
    </location>
</feature>
<feature type="topological domain" description="Extracellular" evidence="5">
    <location>
        <begin position="38"/>
        <end position="481"/>
    </location>
</feature>
<feature type="transmembrane region" description="Helical" evidence="5">
    <location>
        <begin position="482"/>
        <end position="502"/>
    </location>
</feature>
<feature type="topological domain" description="Cytoplasmic" evidence="5">
    <location>
        <begin position="503"/>
        <end position="513"/>
    </location>
</feature>
<feature type="active site" description="Proton acceptor" evidence="1">
    <location>
        <position position="174"/>
    </location>
</feature>
<feature type="glycosylation site" description="N-linked (GlcNAc...) asparagine" evidence="5">
    <location>
        <position position="73"/>
    </location>
</feature>
<feature type="glycosylation site" description="N-linked (GlcNAc...) asparagine" evidence="5">
    <location>
        <position position="227"/>
    </location>
</feature>
<feature type="glycosylation site" description="N-linked (GlcNAc...) asparagine" evidence="5">
    <location>
        <position position="245"/>
    </location>
</feature>
<feature type="glycosylation site" description="N-linked (GlcNAc...) asparagine" evidence="5">
    <location>
        <position position="307"/>
    </location>
</feature>
<feature type="glycosylation site" description="N-linked (GlcNAc...) asparagine" evidence="5">
    <location>
        <position position="336"/>
    </location>
</feature>
<feature type="glycosylation site" description="N-linked (GlcNAc...) asparagine" evidence="5">
    <location>
        <position position="373"/>
    </location>
</feature>
<feature type="glycosylation site" description="N-linked (GlcNAc...) asparagine" evidence="5">
    <location>
        <position position="460"/>
    </location>
</feature>
<feature type="disulfide bond" evidence="3">
    <location>
        <begin position="255"/>
        <end position="300"/>
    </location>
</feature>
<feature type="disulfide bond" evidence="3">
    <location>
        <begin position="281"/>
        <end position="327"/>
    </location>
</feature>
<feature type="disulfide bond" evidence="3">
    <location>
        <begin position="340"/>
        <end position="345"/>
    </location>
</feature>
<feature type="disulfide bond" evidence="3">
    <location>
        <begin position="393"/>
        <end position="416"/>
    </location>
</feature>
<feature type="sequence conflict" description="In Ref. 2; AA sequence." evidence="6" ref="2">
    <original>K</original>
    <variation>N</variation>
    <location>
        <position position="97"/>
    </location>
</feature>
<feature type="sequence conflict" description="In Ref. 2; AA sequence." evidence="6" ref="2">
    <original>INV</original>
    <variation>CGF</variation>
    <location>
        <begin position="101"/>
        <end position="103"/>
    </location>
</feature>
<feature type="sequence conflict" description="In Ref. 2; AA sequence." evidence="6" ref="2">
    <original>K</original>
    <variation>V</variation>
    <location>
        <position position="464"/>
    </location>
</feature>
<accession>O18956</accession>
<gene>
    <name evidence="2" type="primary">ENTPD1</name>
    <name evidence="2" type="synonym">CD39</name>
</gene>
<name>ENTP1_BOVIN</name>
<organism>
    <name type="scientific">Bos taurus</name>
    <name type="common">Bovine</name>
    <dbReference type="NCBI Taxonomy" id="9913"/>
    <lineage>
        <taxon>Eukaryota</taxon>
        <taxon>Metazoa</taxon>
        <taxon>Chordata</taxon>
        <taxon>Craniata</taxon>
        <taxon>Vertebrata</taxon>
        <taxon>Euteleostomi</taxon>
        <taxon>Mammalia</taxon>
        <taxon>Eutheria</taxon>
        <taxon>Laurasiatheria</taxon>
        <taxon>Artiodactyla</taxon>
        <taxon>Ruminantia</taxon>
        <taxon>Pecora</taxon>
        <taxon>Bovidae</taxon>
        <taxon>Bovinae</taxon>
        <taxon>Bos</taxon>
    </lineage>
</organism>
<reference key="1">
    <citation type="submission" date="1997-05" db="EMBL/GenBank/DDBJ databases">
        <authorList>
            <person name="Chang A.S."/>
            <person name="Garcia R.L."/>
            <person name="Chang S.M."/>
            <person name="Schilling W.P."/>
        </authorList>
    </citation>
    <scope>NUCLEOTIDE SEQUENCE [MRNA]</scope>
    <source>
        <tissue>Aortic endothelium</tissue>
    </source>
</reference>
<reference key="2">
    <citation type="journal article" date="1996" name="J. Biol. Chem.">
        <title>Identification and characterization of CD39/vascular ATP diphosphohydrolase.</title>
        <authorList>
            <person name="Kaczmarek E."/>
            <person name="Koziak K."/>
            <person name="Sevigny J."/>
            <person name="Siegel J.B."/>
            <person name="Anrather J."/>
            <person name="Beaudoin A.R."/>
            <person name="Bach F.H."/>
            <person name="Robson S.C."/>
        </authorList>
    </citation>
    <scope>PROTEIN SEQUENCE OF 97-103; 123-133; 136-140; 145-168 AND 459-471</scope>
    <source>
        <tissue>Aorta</tissue>
    </source>
</reference>
<comment type="function">
    <text evidence="2">Catalyzes the hydrolysis of both di- and triphosphate nucleotides (NDPs and NTPs) and hydrolyze NTPs to nucleotide monophosphates (NMPs) in two distinct successive phosphate-releasing steps, with NDPs as intermediates and participates in the regulation of extracellular levels of nucleotides. By hydrolyzing proinflammatory ATP and platelet-activating ADP to AMP, it blocks platelet aggregation and supports blood flow.</text>
</comment>
<comment type="catalytic activity">
    <reaction evidence="2">
        <text>a ribonucleoside 5'-triphosphate + 2 H2O = a ribonucleoside 5'-phosphate + 2 phosphate + 2 H(+)</text>
        <dbReference type="Rhea" id="RHEA:36795"/>
        <dbReference type="ChEBI" id="CHEBI:15377"/>
        <dbReference type="ChEBI" id="CHEBI:15378"/>
        <dbReference type="ChEBI" id="CHEBI:43474"/>
        <dbReference type="ChEBI" id="CHEBI:58043"/>
        <dbReference type="ChEBI" id="CHEBI:61557"/>
        <dbReference type="EC" id="3.6.1.5"/>
    </reaction>
    <physiologicalReaction direction="left-to-right" evidence="2">
        <dbReference type="Rhea" id="RHEA:36796"/>
    </physiologicalReaction>
</comment>
<comment type="catalytic activity">
    <reaction evidence="2">
        <text>a ribonucleoside 5'-triphosphate + H2O = a ribonucleoside 5'-diphosphate + phosphate + H(+)</text>
        <dbReference type="Rhea" id="RHEA:23680"/>
        <dbReference type="ChEBI" id="CHEBI:15377"/>
        <dbReference type="ChEBI" id="CHEBI:15378"/>
        <dbReference type="ChEBI" id="CHEBI:43474"/>
        <dbReference type="ChEBI" id="CHEBI:57930"/>
        <dbReference type="ChEBI" id="CHEBI:61557"/>
    </reaction>
    <physiologicalReaction direction="left-to-right" evidence="2">
        <dbReference type="Rhea" id="RHEA:23681"/>
    </physiologicalReaction>
</comment>
<comment type="catalytic activity">
    <reaction evidence="2">
        <text>a ribonucleoside 5'-diphosphate + H2O = a ribonucleoside 5'-phosphate + phosphate + H(+)</text>
        <dbReference type="Rhea" id="RHEA:36799"/>
        <dbReference type="ChEBI" id="CHEBI:15377"/>
        <dbReference type="ChEBI" id="CHEBI:15378"/>
        <dbReference type="ChEBI" id="CHEBI:43474"/>
        <dbReference type="ChEBI" id="CHEBI:57930"/>
        <dbReference type="ChEBI" id="CHEBI:58043"/>
    </reaction>
    <physiologicalReaction direction="left-to-right" evidence="2">
        <dbReference type="Rhea" id="RHEA:36800"/>
    </physiologicalReaction>
</comment>
<comment type="catalytic activity">
    <reaction evidence="2">
        <text>ATP + 2 H2O = AMP + 2 phosphate + 2 H(+)</text>
        <dbReference type="Rhea" id="RHEA:20988"/>
        <dbReference type="ChEBI" id="CHEBI:15377"/>
        <dbReference type="ChEBI" id="CHEBI:15378"/>
        <dbReference type="ChEBI" id="CHEBI:30616"/>
        <dbReference type="ChEBI" id="CHEBI:43474"/>
        <dbReference type="ChEBI" id="CHEBI:456215"/>
    </reaction>
    <physiologicalReaction direction="left-to-right" evidence="2">
        <dbReference type="Rhea" id="RHEA:20989"/>
    </physiologicalReaction>
</comment>
<comment type="catalytic activity">
    <reaction evidence="2">
        <text>ATP + H2O = ADP + phosphate + H(+)</text>
        <dbReference type="Rhea" id="RHEA:13065"/>
        <dbReference type="ChEBI" id="CHEBI:15377"/>
        <dbReference type="ChEBI" id="CHEBI:15378"/>
        <dbReference type="ChEBI" id="CHEBI:30616"/>
        <dbReference type="ChEBI" id="CHEBI:43474"/>
        <dbReference type="ChEBI" id="CHEBI:456216"/>
    </reaction>
    <physiologicalReaction direction="left-to-right" evidence="2">
        <dbReference type="Rhea" id="RHEA:13066"/>
    </physiologicalReaction>
</comment>
<comment type="catalytic activity">
    <reaction evidence="2">
        <text>ADP + H2O = AMP + phosphate + H(+)</text>
        <dbReference type="Rhea" id="RHEA:61436"/>
        <dbReference type="ChEBI" id="CHEBI:15377"/>
        <dbReference type="ChEBI" id="CHEBI:15378"/>
        <dbReference type="ChEBI" id="CHEBI:43474"/>
        <dbReference type="ChEBI" id="CHEBI:456215"/>
        <dbReference type="ChEBI" id="CHEBI:456216"/>
    </reaction>
    <physiologicalReaction direction="left-to-right" evidence="2">
        <dbReference type="Rhea" id="RHEA:61437"/>
    </physiologicalReaction>
</comment>
<comment type="catalytic activity">
    <reaction evidence="2">
        <text>CTP + 2 H2O = CMP + 2 phosphate + 2 H(+)</text>
        <dbReference type="Rhea" id="RHEA:64908"/>
        <dbReference type="ChEBI" id="CHEBI:15377"/>
        <dbReference type="ChEBI" id="CHEBI:15378"/>
        <dbReference type="ChEBI" id="CHEBI:37563"/>
        <dbReference type="ChEBI" id="CHEBI:43474"/>
        <dbReference type="ChEBI" id="CHEBI:60377"/>
    </reaction>
    <physiologicalReaction direction="left-to-right" evidence="2">
        <dbReference type="Rhea" id="RHEA:64909"/>
    </physiologicalReaction>
</comment>
<comment type="catalytic activity">
    <reaction evidence="2">
        <text>CTP + H2O = CDP + phosphate + H(+)</text>
        <dbReference type="Rhea" id="RHEA:29387"/>
        <dbReference type="ChEBI" id="CHEBI:15377"/>
        <dbReference type="ChEBI" id="CHEBI:15378"/>
        <dbReference type="ChEBI" id="CHEBI:37563"/>
        <dbReference type="ChEBI" id="CHEBI:43474"/>
        <dbReference type="ChEBI" id="CHEBI:58069"/>
    </reaction>
    <physiologicalReaction direction="left-to-right" evidence="2">
        <dbReference type="Rhea" id="RHEA:29388"/>
    </physiologicalReaction>
</comment>
<comment type="catalytic activity">
    <reaction evidence="2">
        <text>CDP + H2O = CMP + phosphate + H(+)</text>
        <dbReference type="Rhea" id="RHEA:64880"/>
        <dbReference type="ChEBI" id="CHEBI:15377"/>
        <dbReference type="ChEBI" id="CHEBI:15378"/>
        <dbReference type="ChEBI" id="CHEBI:43474"/>
        <dbReference type="ChEBI" id="CHEBI:58069"/>
        <dbReference type="ChEBI" id="CHEBI:60377"/>
    </reaction>
    <physiologicalReaction direction="left-to-right" evidence="2">
        <dbReference type="Rhea" id="RHEA:64881"/>
    </physiologicalReaction>
</comment>
<comment type="catalytic activity">
    <reaction evidence="2">
        <text>GTP + 2 H2O = GMP + 2 phosphate + 2 H(+)</text>
        <dbReference type="Rhea" id="RHEA:64904"/>
        <dbReference type="ChEBI" id="CHEBI:15377"/>
        <dbReference type="ChEBI" id="CHEBI:15378"/>
        <dbReference type="ChEBI" id="CHEBI:37565"/>
        <dbReference type="ChEBI" id="CHEBI:43474"/>
        <dbReference type="ChEBI" id="CHEBI:58115"/>
    </reaction>
    <physiologicalReaction direction="left-to-right" evidence="2">
        <dbReference type="Rhea" id="RHEA:64905"/>
    </physiologicalReaction>
</comment>
<comment type="catalytic activity">
    <reaction evidence="2">
        <text>GTP + H2O = GDP + phosphate + H(+)</text>
        <dbReference type="Rhea" id="RHEA:19669"/>
        <dbReference type="ChEBI" id="CHEBI:15377"/>
        <dbReference type="ChEBI" id="CHEBI:15378"/>
        <dbReference type="ChEBI" id="CHEBI:37565"/>
        <dbReference type="ChEBI" id="CHEBI:43474"/>
        <dbReference type="ChEBI" id="CHEBI:58189"/>
    </reaction>
    <physiologicalReaction direction="left-to-right" evidence="2">
        <dbReference type="Rhea" id="RHEA:19670"/>
    </physiologicalReaction>
</comment>
<comment type="catalytic activity">
    <reaction evidence="2">
        <text>GDP + H2O = GMP + phosphate + H(+)</text>
        <dbReference type="Rhea" id="RHEA:22156"/>
        <dbReference type="ChEBI" id="CHEBI:15377"/>
        <dbReference type="ChEBI" id="CHEBI:15378"/>
        <dbReference type="ChEBI" id="CHEBI:43474"/>
        <dbReference type="ChEBI" id="CHEBI:58115"/>
        <dbReference type="ChEBI" id="CHEBI:58189"/>
    </reaction>
    <physiologicalReaction direction="left-to-right" evidence="2">
        <dbReference type="Rhea" id="RHEA:22157"/>
    </physiologicalReaction>
</comment>
<comment type="catalytic activity">
    <reaction evidence="2">
        <text>ITP + 2 H2O = IMP + 2 phosphate + 2 H(+)</text>
        <dbReference type="Rhea" id="RHEA:77735"/>
        <dbReference type="ChEBI" id="CHEBI:15377"/>
        <dbReference type="ChEBI" id="CHEBI:15378"/>
        <dbReference type="ChEBI" id="CHEBI:43474"/>
        <dbReference type="ChEBI" id="CHEBI:58053"/>
        <dbReference type="ChEBI" id="CHEBI:61402"/>
    </reaction>
    <physiologicalReaction direction="left-to-right" evidence="2">
        <dbReference type="Rhea" id="RHEA:77736"/>
    </physiologicalReaction>
</comment>
<comment type="catalytic activity">
    <reaction evidence="2">
        <text>ITP + H2O = IDP + phosphate + H(+)</text>
        <dbReference type="Rhea" id="RHEA:28330"/>
        <dbReference type="ChEBI" id="CHEBI:15377"/>
        <dbReference type="ChEBI" id="CHEBI:15378"/>
        <dbReference type="ChEBI" id="CHEBI:43474"/>
        <dbReference type="ChEBI" id="CHEBI:58280"/>
        <dbReference type="ChEBI" id="CHEBI:61402"/>
    </reaction>
    <physiologicalReaction direction="left-to-right" evidence="2">
        <dbReference type="Rhea" id="RHEA:28331"/>
    </physiologicalReaction>
</comment>
<comment type="catalytic activity">
    <reaction evidence="2">
        <text>IDP + H2O = IMP + phosphate + H(+)</text>
        <dbReference type="Rhea" id="RHEA:35207"/>
        <dbReference type="ChEBI" id="CHEBI:15377"/>
        <dbReference type="ChEBI" id="CHEBI:15378"/>
        <dbReference type="ChEBI" id="CHEBI:43474"/>
        <dbReference type="ChEBI" id="CHEBI:58053"/>
        <dbReference type="ChEBI" id="CHEBI:58280"/>
    </reaction>
    <physiologicalReaction direction="left-to-right" evidence="2">
        <dbReference type="Rhea" id="RHEA:35208"/>
    </physiologicalReaction>
</comment>
<comment type="catalytic activity">
    <reaction evidence="3">
        <text>UTP + 2 H2O = UMP + 2 phosphate + 2 H(+)</text>
        <dbReference type="Rhea" id="RHEA:64896"/>
        <dbReference type="ChEBI" id="CHEBI:15377"/>
        <dbReference type="ChEBI" id="CHEBI:15378"/>
        <dbReference type="ChEBI" id="CHEBI:43474"/>
        <dbReference type="ChEBI" id="CHEBI:46398"/>
        <dbReference type="ChEBI" id="CHEBI:57865"/>
    </reaction>
    <physiologicalReaction direction="left-to-right" evidence="3">
        <dbReference type="Rhea" id="RHEA:64897"/>
    </physiologicalReaction>
</comment>
<comment type="catalytic activity">
    <reaction evidence="3">
        <text>UTP + H2O = UDP + phosphate + H(+)</text>
        <dbReference type="Rhea" id="RHEA:64900"/>
        <dbReference type="ChEBI" id="CHEBI:15377"/>
        <dbReference type="ChEBI" id="CHEBI:15378"/>
        <dbReference type="ChEBI" id="CHEBI:43474"/>
        <dbReference type="ChEBI" id="CHEBI:46398"/>
        <dbReference type="ChEBI" id="CHEBI:58223"/>
    </reaction>
    <physiologicalReaction direction="left-to-right" evidence="3">
        <dbReference type="Rhea" id="RHEA:64901"/>
    </physiologicalReaction>
</comment>
<comment type="catalytic activity">
    <reaction evidence="3">
        <text>UDP + H2O = UMP + phosphate + H(+)</text>
        <dbReference type="Rhea" id="RHEA:64876"/>
        <dbReference type="ChEBI" id="CHEBI:15377"/>
        <dbReference type="ChEBI" id="CHEBI:15378"/>
        <dbReference type="ChEBI" id="CHEBI:43474"/>
        <dbReference type="ChEBI" id="CHEBI:57865"/>
        <dbReference type="ChEBI" id="CHEBI:58223"/>
    </reaction>
    <physiologicalReaction direction="left-to-right" evidence="3">
        <dbReference type="Rhea" id="RHEA:64877"/>
    </physiologicalReaction>
</comment>
<comment type="cofactor">
    <cofactor evidence="2">
        <name>Ca(2+)</name>
        <dbReference type="ChEBI" id="CHEBI:29108"/>
    </cofactor>
    <cofactor evidence="2">
        <name>Mg(2+)</name>
        <dbReference type="ChEBI" id="CHEBI:18420"/>
    </cofactor>
</comment>
<comment type="subunit">
    <text evidence="4">Homodimer; disulfide-linked.</text>
</comment>
<comment type="subcellular location">
    <subcellularLocation>
        <location evidence="2">Membrane</location>
        <topology evidence="2">Multi-pass membrane protein</topology>
    </subcellularLocation>
    <subcellularLocation>
        <location evidence="2">Membrane</location>
        <location evidence="2">Caveola</location>
    </subcellularLocation>
</comment>
<comment type="PTM">
    <text evidence="3">N-glycosylated.</text>
</comment>
<comment type="PTM">
    <text evidence="2">The N-terminus is blocked.</text>
</comment>
<comment type="PTM">
    <text evidence="2">Palmitoylated on Cys-13; which is required for caveola targeting.</text>
</comment>
<comment type="similarity">
    <text evidence="6">Belongs to the GDA1/CD39 NTPase family.</text>
</comment>
<dbReference type="EC" id="3.6.1.5" evidence="2"/>
<dbReference type="EMBL" id="AF005940">
    <property type="protein sequence ID" value="AAB62382.1"/>
    <property type="molecule type" value="mRNA"/>
</dbReference>
<dbReference type="RefSeq" id="NP_776961.1">
    <property type="nucleotide sequence ID" value="NM_174536.2"/>
</dbReference>
<dbReference type="SMR" id="O18956"/>
<dbReference type="FunCoup" id="O18956">
    <property type="interactions" value="223"/>
</dbReference>
<dbReference type="STRING" id="9913.ENSBTAP00000071303"/>
<dbReference type="BindingDB" id="O18956"/>
<dbReference type="ChEMBL" id="CHEMBL2766"/>
<dbReference type="GlyCosmos" id="O18956">
    <property type="glycosylation" value="7 sites, No reported glycans"/>
</dbReference>
<dbReference type="GlyGen" id="O18956">
    <property type="glycosylation" value="7 sites"/>
</dbReference>
<dbReference type="PaxDb" id="9913-ENSBTAP00000045026"/>
<dbReference type="GeneID" id="282223"/>
<dbReference type="KEGG" id="bta:282223"/>
<dbReference type="CTD" id="953"/>
<dbReference type="eggNOG" id="KOG1386">
    <property type="taxonomic scope" value="Eukaryota"/>
</dbReference>
<dbReference type="InParanoid" id="O18956"/>
<dbReference type="OrthoDB" id="6372431at2759"/>
<dbReference type="SABIO-RK" id="O18956"/>
<dbReference type="PRO" id="PR:O18956"/>
<dbReference type="Proteomes" id="UP000009136">
    <property type="component" value="Unplaced"/>
</dbReference>
<dbReference type="GO" id="GO:0005901">
    <property type="term" value="C:caveola"/>
    <property type="evidence" value="ECO:0000250"/>
    <property type="project" value="UniProtKB"/>
</dbReference>
<dbReference type="GO" id="GO:0005886">
    <property type="term" value="C:plasma membrane"/>
    <property type="evidence" value="ECO:0000250"/>
    <property type="project" value="UniProtKB"/>
</dbReference>
<dbReference type="GO" id="GO:0043262">
    <property type="term" value="F:ADP phosphatase activity"/>
    <property type="evidence" value="ECO:0007669"/>
    <property type="project" value="RHEA"/>
</dbReference>
<dbReference type="GO" id="GO:0004050">
    <property type="term" value="F:apyrase activity"/>
    <property type="evidence" value="ECO:0007669"/>
    <property type="project" value="UniProtKB-EC"/>
</dbReference>
<dbReference type="GO" id="GO:0005524">
    <property type="term" value="F:ATP binding"/>
    <property type="evidence" value="ECO:0007669"/>
    <property type="project" value="UniProtKB-KW"/>
</dbReference>
<dbReference type="GO" id="GO:0016887">
    <property type="term" value="F:ATP hydrolysis activity"/>
    <property type="evidence" value="ECO:0007669"/>
    <property type="project" value="RHEA"/>
</dbReference>
<dbReference type="GO" id="GO:0036384">
    <property type="term" value="F:CDP phosphatase activity"/>
    <property type="evidence" value="ECO:0007669"/>
    <property type="project" value="RHEA"/>
</dbReference>
<dbReference type="GO" id="GO:0043273">
    <property type="term" value="F:CTPase activity"/>
    <property type="evidence" value="ECO:0007669"/>
    <property type="project" value="RHEA"/>
</dbReference>
<dbReference type="GO" id="GO:0004382">
    <property type="term" value="F:GDP phosphatase activity"/>
    <property type="evidence" value="ECO:0000318"/>
    <property type="project" value="GO_Central"/>
</dbReference>
<dbReference type="GO" id="GO:0003924">
    <property type="term" value="F:GTPase activity"/>
    <property type="evidence" value="ECO:0007669"/>
    <property type="project" value="RHEA"/>
</dbReference>
<dbReference type="GO" id="GO:1990003">
    <property type="term" value="F:IDP phosphatase activity"/>
    <property type="evidence" value="ECO:0007669"/>
    <property type="project" value="RHEA"/>
</dbReference>
<dbReference type="GO" id="GO:0103023">
    <property type="term" value="F:ITPase activity"/>
    <property type="evidence" value="ECO:0007669"/>
    <property type="project" value="RHEA"/>
</dbReference>
<dbReference type="GO" id="GO:0017110">
    <property type="term" value="F:nucleoside diphosphate phosphatase activity"/>
    <property type="evidence" value="ECO:0000250"/>
    <property type="project" value="UniProtKB"/>
</dbReference>
<dbReference type="GO" id="GO:0017111">
    <property type="term" value="F:ribonucleoside triphosphate phosphatase activity"/>
    <property type="evidence" value="ECO:0000250"/>
    <property type="project" value="UniProtKB"/>
</dbReference>
<dbReference type="GO" id="GO:0045134">
    <property type="term" value="F:UDP phosphatase activity"/>
    <property type="evidence" value="ECO:0000318"/>
    <property type="project" value="GO_Central"/>
</dbReference>
<dbReference type="GO" id="GO:0009134">
    <property type="term" value="P:nucleoside diphosphate catabolic process"/>
    <property type="evidence" value="ECO:0000318"/>
    <property type="project" value="GO_Central"/>
</dbReference>
<dbReference type="GO" id="GO:0070527">
    <property type="term" value="P:platelet aggregation"/>
    <property type="evidence" value="ECO:0000250"/>
    <property type="project" value="UniProtKB"/>
</dbReference>
<dbReference type="FunFam" id="3.30.420.150:FF:000002">
    <property type="entry name" value="Ectonucleoside triphosphate diphosphohydrolase 1"/>
    <property type="match status" value="1"/>
</dbReference>
<dbReference type="FunFam" id="3.30.420.40:FF:000068">
    <property type="entry name" value="Ectonucleoside triphosphate diphosphohydrolase 1"/>
    <property type="match status" value="1"/>
</dbReference>
<dbReference type="Gene3D" id="3.30.420.40">
    <property type="match status" value="1"/>
</dbReference>
<dbReference type="Gene3D" id="3.30.420.150">
    <property type="entry name" value="Exopolyphosphatase. Domain 2"/>
    <property type="match status" value="1"/>
</dbReference>
<dbReference type="InterPro" id="IPR000407">
    <property type="entry name" value="GDA1_CD39_NTPase"/>
</dbReference>
<dbReference type="PANTHER" id="PTHR11782">
    <property type="entry name" value="ADENOSINE/GUANOSINE DIPHOSPHATASE"/>
    <property type="match status" value="1"/>
</dbReference>
<dbReference type="PANTHER" id="PTHR11782:SF32">
    <property type="entry name" value="ECTONUCLEOSIDE TRIPHOSPHATE DIPHOSPHOHYDROLASE 1"/>
    <property type="match status" value="1"/>
</dbReference>
<dbReference type="Pfam" id="PF01150">
    <property type="entry name" value="GDA1_CD39"/>
    <property type="match status" value="1"/>
</dbReference>
<dbReference type="PROSITE" id="PS01238">
    <property type="entry name" value="GDA1_CD39_NTPASE"/>
    <property type="match status" value="1"/>
</dbReference>
<sequence length="513" mass="58114">MEDRRESELKVFCSKNILSILGFSCIIAVIALLALGLTQNKALPENVKFGIVLDAGSSHTSLYIYRWPAEKENDTGVVTQIEESNVKGPGISGFAKKVNEINVYLTACMERAQKVIPSIQHMETPVYLGATAGMRLLRMENKQMADKILAAVASSISEYPFDFQGARIISGQEEGAYGWITVNYLLGKFTQKLSWFNLKPSKDDTQETYGALDLGGASTQITFVPQNETTESPNNNLYFRLYGKNYSVYTHSFLCYGKDQALLQKLALGLQGTNGIIHEPCFHSRYMRKIKMSVLNEGFCTKRHELNSSFYPLVDIEIRGAGNFQRCRQSIIQLFNTSYCPYSSCSFNGVFLPPLHGQFGAFSAFYYVMEFLNLTSEESVSVEQLTEKLEEFCAQRWEEVQKNFGEVKEKYLSEYCFSGTYILVLLLNGYHFTAESWKNIHFMNKVRSTDVGWTLGYMLNLTNKIPAEEPMSPPLPHSTYVFLMVLFSLILLAVIIVGIVVFHKPSYFWKDMV</sequence>
<evidence type="ECO:0000250" key="1">
    <source>
        <dbReference type="UniProtKB" id="O35795"/>
    </source>
</evidence>
<evidence type="ECO:0000250" key="2">
    <source>
        <dbReference type="UniProtKB" id="P49961"/>
    </source>
</evidence>
<evidence type="ECO:0000250" key="3">
    <source>
        <dbReference type="UniProtKB" id="P97687"/>
    </source>
</evidence>
<evidence type="ECO:0000250" key="4">
    <source>
        <dbReference type="UniProtKB" id="Q9MYU4"/>
    </source>
</evidence>
<evidence type="ECO:0000255" key="5"/>
<evidence type="ECO:0000305" key="6"/>
<proteinExistence type="evidence at protein level"/>